<gene>
    <name evidence="1" type="primary">rplL</name>
    <name type="ordered locus">Aasi_1397</name>
</gene>
<comment type="function">
    <text evidence="1">Forms part of the ribosomal stalk which helps the ribosome interact with GTP-bound translation factors. Is thus essential for accurate translation.</text>
</comment>
<comment type="subunit">
    <text evidence="1">Homodimer. Part of the ribosomal stalk of the 50S ribosomal subunit. Forms a multimeric L10(L12)X complex, where L10 forms an elongated spine to which 2 to 4 L12 dimers bind in a sequential fashion. Binds GTP-bound translation factors.</text>
</comment>
<comment type="similarity">
    <text evidence="1">Belongs to the bacterial ribosomal protein bL12 family.</text>
</comment>
<evidence type="ECO:0000255" key="1">
    <source>
        <dbReference type="HAMAP-Rule" id="MF_00368"/>
    </source>
</evidence>
<evidence type="ECO:0000256" key="2">
    <source>
        <dbReference type="SAM" id="MobiDB-lite"/>
    </source>
</evidence>
<evidence type="ECO:0000305" key="3"/>
<protein>
    <recommendedName>
        <fullName evidence="1">Large ribosomal subunit protein bL12</fullName>
    </recommendedName>
    <alternativeName>
        <fullName evidence="3">50S ribosomal protein L7/L12</fullName>
    </alternativeName>
</protein>
<name>RL7_AMOA5</name>
<keyword id="KW-1185">Reference proteome</keyword>
<keyword id="KW-0687">Ribonucleoprotein</keyword>
<keyword id="KW-0689">Ribosomal protein</keyword>
<reference key="1">
    <citation type="journal article" date="2010" name="J. Bacteriol.">
        <title>The genome of the amoeba symbiont 'Candidatus Amoebophilus asiaticus' reveals common mechanisms for host cell interaction among amoeba-associated bacteria.</title>
        <authorList>
            <person name="Schmitz-Esser S."/>
            <person name="Tischler P."/>
            <person name="Arnold R."/>
            <person name="Montanaro J."/>
            <person name="Wagner M."/>
            <person name="Rattei T."/>
            <person name="Horn M."/>
        </authorList>
    </citation>
    <scope>NUCLEOTIDE SEQUENCE [LARGE SCALE GENOMIC DNA]</scope>
    <source>
        <strain>5a2</strain>
    </source>
</reference>
<feature type="chain" id="PRO_1000121386" description="Large ribosomal subunit protein bL12">
    <location>
        <begin position="1"/>
        <end position="127"/>
    </location>
</feature>
<feature type="region of interest" description="Disordered" evidence="2">
    <location>
        <begin position="98"/>
        <end position="127"/>
    </location>
</feature>
<organism>
    <name type="scientific">Amoebophilus asiaticus (strain 5a2)</name>
    <dbReference type="NCBI Taxonomy" id="452471"/>
    <lineage>
        <taxon>Bacteria</taxon>
        <taxon>Pseudomonadati</taxon>
        <taxon>Bacteroidota</taxon>
        <taxon>Cytophagia</taxon>
        <taxon>Cytophagales</taxon>
        <taxon>Amoebophilaceae</taxon>
        <taxon>Candidatus Amoebophilus</taxon>
    </lineage>
</organism>
<accession>B3ETZ1</accession>
<dbReference type="EMBL" id="CP001102">
    <property type="protein sequence ID" value="ACE06693.1"/>
    <property type="molecule type" value="Genomic_DNA"/>
</dbReference>
<dbReference type="RefSeq" id="WP_012473435.1">
    <property type="nucleotide sequence ID" value="NC_010830.1"/>
</dbReference>
<dbReference type="SMR" id="B3ETZ1"/>
<dbReference type="STRING" id="452471.Aasi_1397"/>
<dbReference type="KEGG" id="aas:Aasi_1397"/>
<dbReference type="eggNOG" id="COG0222">
    <property type="taxonomic scope" value="Bacteria"/>
</dbReference>
<dbReference type="HOGENOM" id="CLU_086499_3_1_10"/>
<dbReference type="OrthoDB" id="9811748at2"/>
<dbReference type="Proteomes" id="UP000001227">
    <property type="component" value="Chromosome"/>
</dbReference>
<dbReference type="GO" id="GO:0022625">
    <property type="term" value="C:cytosolic large ribosomal subunit"/>
    <property type="evidence" value="ECO:0007669"/>
    <property type="project" value="TreeGrafter"/>
</dbReference>
<dbReference type="GO" id="GO:0003729">
    <property type="term" value="F:mRNA binding"/>
    <property type="evidence" value="ECO:0007669"/>
    <property type="project" value="TreeGrafter"/>
</dbReference>
<dbReference type="GO" id="GO:0003735">
    <property type="term" value="F:structural constituent of ribosome"/>
    <property type="evidence" value="ECO:0007669"/>
    <property type="project" value="InterPro"/>
</dbReference>
<dbReference type="GO" id="GO:0006412">
    <property type="term" value="P:translation"/>
    <property type="evidence" value="ECO:0007669"/>
    <property type="project" value="UniProtKB-UniRule"/>
</dbReference>
<dbReference type="CDD" id="cd00387">
    <property type="entry name" value="Ribosomal_L7_L12"/>
    <property type="match status" value="1"/>
</dbReference>
<dbReference type="FunFam" id="3.30.1390.10:FF:000001">
    <property type="entry name" value="50S ribosomal protein L7/L12"/>
    <property type="match status" value="1"/>
</dbReference>
<dbReference type="Gene3D" id="3.30.1390.10">
    <property type="match status" value="1"/>
</dbReference>
<dbReference type="Gene3D" id="1.20.5.710">
    <property type="entry name" value="Single helix bin"/>
    <property type="match status" value="1"/>
</dbReference>
<dbReference type="HAMAP" id="MF_00368">
    <property type="entry name" value="Ribosomal_bL12"/>
    <property type="match status" value="1"/>
</dbReference>
<dbReference type="InterPro" id="IPR000206">
    <property type="entry name" value="Ribosomal_bL12"/>
</dbReference>
<dbReference type="InterPro" id="IPR013823">
    <property type="entry name" value="Ribosomal_bL12_C"/>
</dbReference>
<dbReference type="InterPro" id="IPR014719">
    <property type="entry name" value="Ribosomal_bL12_C/ClpS-like"/>
</dbReference>
<dbReference type="InterPro" id="IPR008932">
    <property type="entry name" value="Ribosomal_bL12_oligo"/>
</dbReference>
<dbReference type="InterPro" id="IPR036235">
    <property type="entry name" value="Ribosomal_bL12_oligo_N_sf"/>
</dbReference>
<dbReference type="NCBIfam" id="TIGR00855">
    <property type="entry name" value="L12"/>
    <property type="match status" value="1"/>
</dbReference>
<dbReference type="PANTHER" id="PTHR45987">
    <property type="entry name" value="39S RIBOSOMAL PROTEIN L12"/>
    <property type="match status" value="1"/>
</dbReference>
<dbReference type="PANTHER" id="PTHR45987:SF4">
    <property type="entry name" value="LARGE RIBOSOMAL SUBUNIT PROTEIN BL12M"/>
    <property type="match status" value="1"/>
</dbReference>
<dbReference type="Pfam" id="PF00542">
    <property type="entry name" value="Ribosomal_L12"/>
    <property type="match status" value="1"/>
</dbReference>
<dbReference type="Pfam" id="PF16320">
    <property type="entry name" value="Ribosomal_L12_N"/>
    <property type="match status" value="1"/>
</dbReference>
<dbReference type="SUPFAM" id="SSF54736">
    <property type="entry name" value="ClpS-like"/>
    <property type="match status" value="1"/>
</dbReference>
<dbReference type="SUPFAM" id="SSF48300">
    <property type="entry name" value="Ribosomal protein L7/12, oligomerisation (N-terminal) domain"/>
    <property type="match status" value="1"/>
</dbReference>
<sequence length="127" mass="13124">MSDLKKFAEQLVNLTVKEVNELAAILKEEHGIEPAAAAPVVVAGGGAQGGDSKAAEEKTHFDVILKSAGASKLSVVKLVKDLTGLGLKEAKDLVDAAPKPIKEGAPKAEAESLKSKLEEAGAEVELK</sequence>
<proteinExistence type="inferred from homology"/>